<gene>
    <name evidence="1" type="primary">rnfA</name>
    <name type="ordered locus">VS_0978</name>
</gene>
<accession>B7VLT9</accession>
<protein>
    <recommendedName>
        <fullName evidence="1">Ion-translocating oxidoreductase complex subunit A</fullName>
        <ecNumber evidence="1">7.-.-.-</ecNumber>
    </recommendedName>
    <alternativeName>
        <fullName evidence="1">Rnf electron transport complex subunit A</fullName>
    </alternativeName>
</protein>
<comment type="function">
    <text evidence="1">Part of a membrane-bound complex that couples electron transfer with translocation of ions across the membrane.</text>
</comment>
<comment type="subunit">
    <text evidence="1">The complex is composed of six subunits: RnfA, RnfB, RnfC, RnfD, RnfE and RnfG.</text>
</comment>
<comment type="subcellular location">
    <subcellularLocation>
        <location evidence="1">Cell inner membrane</location>
        <topology evidence="1">Multi-pass membrane protein</topology>
    </subcellularLocation>
</comment>
<comment type="similarity">
    <text evidence="1">Belongs to the NqrDE/RnfAE family.</text>
</comment>
<reference key="1">
    <citation type="submission" date="2009-02" db="EMBL/GenBank/DDBJ databases">
        <title>Vibrio splendidus str. LGP32 complete genome.</title>
        <authorList>
            <person name="Mazel D."/>
            <person name="Le Roux F."/>
        </authorList>
    </citation>
    <scope>NUCLEOTIDE SEQUENCE [LARGE SCALE GENOMIC DNA]</scope>
    <source>
        <strain>LGP32</strain>
    </source>
</reference>
<feature type="chain" id="PRO_1000191743" description="Ion-translocating oxidoreductase complex subunit A">
    <location>
        <begin position="1"/>
        <end position="192"/>
    </location>
</feature>
<feature type="transmembrane region" description="Helical" evidence="1">
    <location>
        <begin position="5"/>
        <end position="25"/>
    </location>
</feature>
<feature type="transmembrane region" description="Helical" evidence="1">
    <location>
        <begin position="39"/>
        <end position="59"/>
    </location>
</feature>
<feature type="transmembrane region" description="Helical" evidence="1">
    <location>
        <begin position="63"/>
        <end position="83"/>
    </location>
</feature>
<feature type="transmembrane region" description="Helical" evidence="1">
    <location>
        <begin position="102"/>
        <end position="122"/>
    </location>
</feature>
<feature type="transmembrane region" description="Helical" evidence="1">
    <location>
        <begin position="134"/>
        <end position="154"/>
    </location>
</feature>
<feature type="transmembrane region" description="Helical" evidence="1">
    <location>
        <begin position="171"/>
        <end position="191"/>
    </location>
</feature>
<sequence length="192" mass="20752">MTEYLLLLVGTVLVNNFVLVKFLGLCPFMGVSKKLETAIGMGLATTFVLTLASVSAYLVETYILTPLGIEYLRTMSFILVIAVVVQFTEMVVHKTSPTLYRLLGIFLPLITTNCAVLGVALLNINENHNFIQSIIYGFGAAVGFSLVLILFAAMRERIAVADVPMPFKGASIAMITAGLMSLAFMGFTGLVK</sequence>
<dbReference type="EC" id="7.-.-.-" evidence="1"/>
<dbReference type="EMBL" id="FM954972">
    <property type="protein sequence ID" value="CAV18008.1"/>
    <property type="molecule type" value="Genomic_DNA"/>
</dbReference>
<dbReference type="SMR" id="B7VLT9"/>
<dbReference type="STRING" id="575788.VS_0978"/>
<dbReference type="KEGG" id="vsp:VS_0978"/>
<dbReference type="eggNOG" id="COG4657">
    <property type="taxonomic scope" value="Bacteria"/>
</dbReference>
<dbReference type="HOGENOM" id="CLU_095255_1_0_6"/>
<dbReference type="Proteomes" id="UP000009100">
    <property type="component" value="Chromosome 1"/>
</dbReference>
<dbReference type="GO" id="GO:0005886">
    <property type="term" value="C:plasma membrane"/>
    <property type="evidence" value="ECO:0007669"/>
    <property type="project" value="UniProtKB-SubCell"/>
</dbReference>
<dbReference type="GO" id="GO:0022900">
    <property type="term" value="P:electron transport chain"/>
    <property type="evidence" value="ECO:0007669"/>
    <property type="project" value="UniProtKB-UniRule"/>
</dbReference>
<dbReference type="HAMAP" id="MF_00459">
    <property type="entry name" value="RsxA_RnfA"/>
    <property type="match status" value="1"/>
</dbReference>
<dbReference type="InterPro" id="IPR011293">
    <property type="entry name" value="Ion_transpt_RnfA/RsxA"/>
</dbReference>
<dbReference type="InterPro" id="IPR003667">
    <property type="entry name" value="NqrDE/RnfAE"/>
</dbReference>
<dbReference type="InterPro" id="IPR050133">
    <property type="entry name" value="NqrDE/RnfAE_oxidrdctase"/>
</dbReference>
<dbReference type="NCBIfam" id="NF003481">
    <property type="entry name" value="PRK05151.1"/>
    <property type="match status" value="1"/>
</dbReference>
<dbReference type="NCBIfam" id="TIGR01943">
    <property type="entry name" value="rnfA"/>
    <property type="match status" value="1"/>
</dbReference>
<dbReference type="PANTHER" id="PTHR30335">
    <property type="entry name" value="INTEGRAL MEMBRANE PROTEIN OF SOXR-REDUCING COMPLEX"/>
    <property type="match status" value="1"/>
</dbReference>
<dbReference type="PANTHER" id="PTHR30335:SF0">
    <property type="entry name" value="ION-TRANSLOCATING OXIDOREDUCTASE COMPLEX SUBUNIT A"/>
    <property type="match status" value="1"/>
</dbReference>
<dbReference type="Pfam" id="PF02508">
    <property type="entry name" value="Rnf-Nqr"/>
    <property type="match status" value="1"/>
</dbReference>
<dbReference type="PIRSF" id="PIRSF006102">
    <property type="entry name" value="NQR_DE"/>
    <property type="match status" value="1"/>
</dbReference>
<evidence type="ECO:0000255" key="1">
    <source>
        <dbReference type="HAMAP-Rule" id="MF_00459"/>
    </source>
</evidence>
<proteinExistence type="inferred from homology"/>
<keyword id="KW-0997">Cell inner membrane</keyword>
<keyword id="KW-1003">Cell membrane</keyword>
<keyword id="KW-0249">Electron transport</keyword>
<keyword id="KW-0472">Membrane</keyword>
<keyword id="KW-1278">Translocase</keyword>
<keyword id="KW-0812">Transmembrane</keyword>
<keyword id="KW-1133">Transmembrane helix</keyword>
<keyword id="KW-0813">Transport</keyword>
<organism>
    <name type="scientific">Vibrio atlanticus (strain LGP32)</name>
    <name type="common">Vibrio splendidus (strain Mel32)</name>
    <dbReference type="NCBI Taxonomy" id="575788"/>
    <lineage>
        <taxon>Bacteria</taxon>
        <taxon>Pseudomonadati</taxon>
        <taxon>Pseudomonadota</taxon>
        <taxon>Gammaproteobacteria</taxon>
        <taxon>Vibrionales</taxon>
        <taxon>Vibrionaceae</taxon>
        <taxon>Vibrio</taxon>
    </lineage>
</organism>
<name>RNFA_VIBA3</name>